<name>SMRB_VIBVY</name>
<protein>
    <recommendedName>
        <fullName evidence="1">Ribosome rescue factor SmrB</fullName>
        <ecNumber evidence="1">3.1.-.-</ecNumber>
    </recommendedName>
</protein>
<accession>Q7MIS9</accession>
<organism>
    <name type="scientific">Vibrio vulnificus (strain YJ016)</name>
    <dbReference type="NCBI Taxonomy" id="196600"/>
    <lineage>
        <taxon>Bacteria</taxon>
        <taxon>Pseudomonadati</taxon>
        <taxon>Pseudomonadota</taxon>
        <taxon>Gammaproteobacteria</taxon>
        <taxon>Vibrionales</taxon>
        <taxon>Vibrionaceae</taxon>
        <taxon>Vibrio</taxon>
    </lineage>
</organism>
<comment type="function">
    <text evidence="1">Acts as a ribosome collision sensor. Detects stalled/collided disomes (pairs of ribosomes where the leading ribosome is stalled and a second ribosome has collided with it) and endonucleolytically cleaves mRNA at the 5' boundary of the stalled ribosome. Stalled/collided disomes form a new interface (primarily via the 30S subunits) that binds SmrB. Cleaved mRNA becomes available for tmRNA ligation, leading to ribosomal subunit dissociation and rescue of stalled ribosomes.</text>
</comment>
<comment type="subunit">
    <text evidence="1">Associates with collided ribosomes, but not with correctly translating polysomes.</text>
</comment>
<comment type="similarity">
    <text evidence="1">Belongs to the SmrB family.</text>
</comment>
<keyword id="KW-0255">Endonuclease</keyword>
<keyword id="KW-0378">Hydrolase</keyword>
<keyword id="KW-0540">Nuclease</keyword>
<keyword id="KW-0694">RNA-binding</keyword>
<keyword id="KW-0699">rRNA-binding</keyword>
<proteinExistence type="inferred from homology"/>
<gene>
    <name evidence="1" type="primary">smrB</name>
    <name type="ordered locus">VV2436</name>
</gene>
<dbReference type="EC" id="3.1.-.-" evidence="1"/>
<dbReference type="EMBL" id="BA000037">
    <property type="protein sequence ID" value="BAC95200.1"/>
    <property type="molecule type" value="Genomic_DNA"/>
</dbReference>
<dbReference type="RefSeq" id="WP_011150890.1">
    <property type="nucleotide sequence ID" value="NC_005139.1"/>
</dbReference>
<dbReference type="SMR" id="Q7MIS9"/>
<dbReference type="STRING" id="672.VV93_v1c21390"/>
<dbReference type="GeneID" id="93896201"/>
<dbReference type="KEGG" id="vvy:VV2436"/>
<dbReference type="eggNOG" id="COG2840">
    <property type="taxonomic scope" value="Bacteria"/>
</dbReference>
<dbReference type="HOGENOM" id="CLU_055978_4_0_6"/>
<dbReference type="Proteomes" id="UP000002675">
    <property type="component" value="Chromosome I"/>
</dbReference>
<dbReference type="GO" id="GO:0004521">
    <property type="term" value="F:RNA endonuclease activity"/>
    <property type="evidence" value="ECO:0007669"/>
    <property type="project" value="UniProtKB-UniRule"/>
</dbReference>
<dbReference type="GO" id="GO:0019843">
    <property type="term" value="F:rRNA binding"/>
    <property type="evidence" value="ECO:0007669"/>
    <property type="project" value="UniProtKB-UniRule"/>
</dbReference>
<dbReference type="GO" id="GO:0072344">
    <property type="term" value="P:rescue of stalled ribosome"/>
    <property type="evidence" value="ECO:0007669"/>
    <property type="project" value="UniProtKB-UniRule"/>
</dbReference>
<dbReference type="Gene3D" id="3.30.1370.110">
    <property type="match status" value="1"/>
</dbReference>
<dbReference type="HAMAP" id="MF_01042">
    <property type="entry name" value="SmrB"/>
    <property type="match status" value="1"/>
</dbReference>
<dbReference type="InterPro" id="IPR002625">
    <property type="entry name" value="Smr_dom"/>
</dbReference>
<dbReference type="InterPro" id="IPR036063">
    <property type="entry name" value="Smr_dom_sf"/>
</dbReference>
<dbReference type="InterPro" id="IPR022990">
    <property type="entry name" value="SmrB-like"/>
</dbReference>
<dbReference type="NCBIfam" id="NF003432">
    <property type="entry name" value="PRK04946.1"/>
    <property type="match status" value="1"/>
</dbReference>
<dbReference type="PANTHER" id="PTHR35562">
    <property type="entry name" value="DNA ENDONUCLEASE SMRA-RELATED"/>
    <property type="match status" value="1"/>
</dbReference>
<dbReference type="PANTHER" id="PTHR35562:SF1">
    <property type="entry name" value="UPF0115 PROTEIN YFCN"/>
    <property type="match status" value="1"/>
</dbReference>
<dbReference type="Pfam" id="PF01713">
    <property type="entry name" value="Smr"/>
    <property type="match status" value="1"/>
</dbReference>
<dbReference type="SMART" id="SM00463">
    <property type="entry name" value="SMR"/>
    <property type="match status" value="1"/>
</dbReference>
<dbReference type="SUPFAM" id="SSF160443">
    <property type="entry name" value="SMR domain-like"/>
    <property type="match status" value="1"/>
</dbReference>
<dbReference type="PROSITE" id="PS50828">
    <property type="entry name" value="SMR"/>
    <property type="match status" value="1"/>
</dbReference>
<evidence type="ECO:0000255" key="1">
    <source>
        <dbReference type="HAMAP-Rule" id="MF_01042"/>
    </source>
</evidence>
<feature type="chain" id="PRO_0000214566" description="Ribosome rescue factor SmrB">
    <location>
        <begin position="1"/>
        <end position="176"/>
    </location>
</feature>
<feature type="domain" description="Smr" evidence="1">
    <location>
        <begin position="97"/>
        <end position="172"/>
    </location>
</feature>
<reference key="1">
    <citation type="journal article" date="2003" name="Genome Res.">
        <title>Comparative genome analysis of Vibrio vulnificus, a marine pathogen.</title>
        <authorList>
            <person name="Chen C.-Y."/>
            <person name="Wu K.-M."/>
            <person name="Chang Y.-C."/>
            <person name="Chang C.-H."/>
            <person name="Tsai H.-C."/>
            <person name="Liao T.-L."/>
            <person name="Liu Y.-M."/>
            <person name="Chen H.-J."/>
            <person name="Shen A.B.-T."/>
            <person name="Li J.-C."/>
            <person name="Su T.-L."/>
            <person name="Shao C.-P."/>
            <person name="Lee C.-T."/>
            <person name="Hor L.-I."/>
            <person name="Tsai S.-F."/>
        </authorList>
    </citation>
    <scope>NUCLEOTIDE SEQUENCE [LARGE SCALE GENOMIC DNA]</scope>
    <source>
        <strain>YJ016</strain>
    </source>
</reference>
<sequence length="176" mass="20087">MSNKDNDLDDDFSLFREAVQGIKKLPQDTIVQQPNRNTKQKEIKRISREASDSEFYFSDEFVPLLSEEGPTRYARDDVSTYEVKRLRRGVYVPDVFLDMHGMTQQEAKRELGAMIAYCVKNEVHCACVQHGIGKHILKQKTPLWLAQHPDVLAFHQAPLEFGGDGALLVLLSIPEK</sequence>